<organism>
    <name type="scientific">Xenopus laevis</name>
    <name type="common">African clawed frog</name>
    <dbReference type="NCBI Taxonomy" id="8355"/>
    <lineage>
        <taxon>Eukaryota</taxon>
        <taxon>Metazoa</taxon>
        <taxon>Chordata</taxon>
        <taxon>Craniata</taxon>
        <taxon>Vertebrata</taxon>
        <taxon>Euteleostomi</taxon>
        <taxon>Amphibia</taxon>
        <taxon>Batrachia</taxon>
        <taxon>Anura</taxon>
        <taxon>Pipoidea</taxon>
        <taxon>Pipidae</taxon>
        <taxon>Xenopodinae</taxon>
        <taxon>Xenopus</taxon>
        <taxon>Xenopus</taxon>
    </lineage>
</organism>
<proteinExistence type="evidence at transcript level"/>
<gene>
    <name type="primary">nusap1-c</name>
</gene>
<evidence type="ECO:0000250" key="1"/>
<evidence type="ECO:0000256" key="2">
    <source>
        <dbReference type="SAM" id="MobiDB-lite"/>
    </source>
</evidence>
<evidence type="ECO:0000305" key="3"/>
<reference key="1">
    <citation type="submission" date="2006-12" db="EMBL/GenBank/DDBJ databases">
        <authorList>
            <consortium name="NIH - Xenopus Gene Collection (XGC) project"/>
        </authorList>
    </citation>
    <scope>NUCLEOTIDE SEQUENCE [LARGE SCALE MRNA]</scope>
    <source>
        <tissue>Ovary</tissue>
    </source>
</reference>
<accession>A1L3I5</accession>
<feature type="chain" id="PRO_0000302040" description="Nucleolar and spindle-associated protein 1-C">
    <location>
        <begin position="1"/>
        <end position="525"/>
    </location>
</feature>
<feature type="region of interest" description="Disordered" evidence="2">
    <location>
        <begin position="43"/>
        <end position="203"/>
    </location>
</feature>
<feature type="region of interest" description="Disordered" evidence="2">
    <location>
        <begin position="250"/>
        <end position="293"/>
    </location>
</feature>
<feature type="region of interest" description="Disordered" evidence="2">
    <location>
        <begin position="373"/>
        <end position="398"/>
    </location>
</feature>
<feature type="region of interest" description="Disordered" evidence="2">
    <location>
        <begin position="452"/>
        <end position="525"/>
    </location>
</feature>
<feature type="compositionally biased region" description="Polar residues" evidence="2">
    <location>
        <begin position="58"/>
        <end position="69"/>
    </location>
</feature>
<feature type="compositionally biased region" description="Basic residues" evidence="2">
    <location>
        <begin position="82"/>
        <end position="92"/>
    </location>
</feature>
<feature type="compositionally biased region" description="Basic and acidic residues" evidence="2">
    <location>
        <begin position="93"/>
        <end position="102"/>
    </location>
</feature>
<feature type="compositionally biased region" description="Polar residues" evidence="2">
    <location>
        <begin position="113"/>
        <end position="127"/>
    </location>
</feature>
<feature type="compositionally biased region" description="Basic and acidic residues" evidence="2">
    <location>
        <begin position="160"/>
        <end position="169"/>
    </location>
</feature>
<feature type="compositionally biased region" description="Polar residues" evidence="2">
    <location>
        <begin position="270"/>
        <end position="285"/>
    </location>
</feature>
<feature type="compositionally biased region" description="Polar residues" evidence="2">
    <location>
        <begin position="476"/>
        <end position="494"/>
    </location>
</feature>
<feature type="compositionally biased region" description="Basic and acidic residues" evidence="2">
    <location>
        <begin position="495"/>
        <end position="514"/>
    </location>
</feature>
<keyword id="KW-0131">Cell cycle</keyword>
<keyword id="KW-0132">Cell division</keyword>
<keyword id="KW-0963">Cytoplasm</keyword>
<keyword id="KW-0206">Cytoskeleton</keyword>
<keyword id="KW-0238">DNA-binding</keyword>
<keyword id="KW-0469">Meiosis</keyword>
<keyword id="KW-0493">Microtubule</keyword>
<keyword id="KW-0498">Mitosis</keyword>
<keyword id="KW-0539">Nucleus</keyword>
<keyword id="KW-1185">Reference proteome</keyword>
<protein>
    <recommendedName>
        <fullName>Nucleolar and spindle-associated protein 1-C</fullName>
        <shortName>NuSAP C</shortName>
    </recommendedName>
</protein>
<name>NSAPC_XENLA</name>
<comment type="function">
    <text evidence="1">Microtubule-associated protein with the capacity to bundle and stabilize microtubules. May associate with chromosomes and promote the organization of meiotic or mitotic spindle microtubules around them (By similarity).</text>
</comment>
<comment type="subunit">
    <text evidence="1">Interacts with DNA, microtubules, ipo7, kpna2 and kpnb1. Microtubule stabilization is inhibited by ipo7 and kpna2, while microtubule bundling is inhibited by kpnb1. Active GTP-bound ran causes dissociation of ipo7 and kpnb1 (By similarity).</text>
</comment>
<comment type="subcellular location">
    <subcellularLocation>
        <location evidence="1">Cytoplasm</location>
    </subcellularLocation>
    <subcellularLocation>
        <location evidence="1">Nucleus</location>
    </subcellularLocation>
    <subcellularLocation>
        <location evidence="1">Cytoplasm</location>
        <location evidence="1">Cytoskeleton</location>
        <location evidence="1">Spindle</location>
    </subcellularLocation>
    <text evidence="1">Associates with meiotic or mitotic spindle microtubules, particularly in the vicinity of chromosomes.</text>
</comment>
<comment type="similarity">
    <text evidence="3">Belongs to the NUSAP family.</text>
</comment>
<comment type="sequence caution" evidence="3">
    <conflict type="erroneous initiation">
        <sequence resource="EMBL-CDS" id="AAI30119"/>
    </conflict>
</comment>
<dbReference type="EMBL" id="BC130118">
    <property type="protein sequence ID" value="AAI30119.1"/>
    <property type="status" value="ALT_INIT"/>
    <property type="molecule type" value="mRNA"/>
</dbReference>
<dbReference type="SMR" id="A1L3I5"/>
<dbReference type="AGR" id="Xenbase:XB-GENE-865275"/>
<dbReference type="Xenbase" id="XB-GENE-865275">
    <property type="gene designation" value="nusap1.S"/>
</dbReference>
<dbReference type="Proteomes" id="UP000186698">
    <property type="component" value="Unplaced"/>
</dbReference>
<dbReference type="GO" id="GO:0005737">
    <property type="term" value="C:cytoplasm"/>
    <property type="evidence" value="ECO:0007669"/>
    <property type="project" value="UniProtKB-SubCell"/>
</dbReference>
<dbReference type="GO" id="GO:0005874">
    <property type="term" value="C:microtubule"/>
    <property type="evidence" value="ECO:0007669"/>
    <property type="project" value="UniProtKB-KW"/>
</dbReference>
<dbReference type="GO" id="GO:0072686">
    <property type="term" value="C:mitotic spindle"/>
    <property type="evidence" value="ECO:0000318"/>
    <property type="project" value="GO_Central"/>
</dbReference>
<dbReference type="GO" id="GO:0005730">
    <property type="term" value="C:nucleolus"/>
    <property type="evidence" value="ECO:0000318"/>
    <property type="project" value="GO_Central"/>
</dbReference>
<dbReference type="GO" id="GO:0003677">
    <property type="term" value="F:DNA binding"/>
    <property type="evidence" value="ECO:0007669"/>
    <property type="project" value="UniProtKB-KW"/>
</dbReference>
<dbReference type="GO" id="GO:0008017">
    <property type="term" value="F:microtubule binding"/>
    <property type="evidence" value="ECO:0000318"/>
    <property type="project" value="GO_Central"/>
</dbReference>
<dbReference type="GO" id="GO:0040001">
    <property type="term" value="P:establishment of mitotic spindle localization"/>
    <property type="evidence" value="ECO:0000318"/>
    <property type="project" value="GO_Central"/>
</dbReference>
<dbReference type="GO" id="GO:0051321">
    <property type="term" value="P:meiotic cell cycle"/>
    <property type="evidence" value="ECO:0007669"/>
    <property type="project" value="UniProtKB-KW"/>
</dbReference>
<dbReference type="GO" id="GO:0007076">
    <property type="term" value="P:mitotic chromosome condensation"/>
    <property type="evidence" value="ECO:0000318"/>
    <property type="project" value="GO_Central"/>
</dbReference>
<dbReference type="GO" id="GO:0000281">
    <property type="term" value="P:mitotic cytokinesis"/>
    <property type="evidence" value="ECO:0000318"/>
    <property type="project" value="GO_Central"/>
</dbReference>
<dbReference type="InterPro" id="IPR026756">
    <property type="entry name" value="NuSAP"/>
</dbReference>
<dbReference type="PANTHER" id="PTHR15874">
    <property type="entry name" value="NUCLEOLAR AND SPINDLE-ASSOCIATED PROTEIN 1"/>
    <property type="match status" value="1"/>
</dbReference>
<dbReference type="PANTHER" id="PTHR15874:SF1">
    <property type="entry name" value="NUCLEOLAR AND SPINDLE-ASSOCIATED PROTEIN 1"/>
    <property type="match status" value="1"/>
</dbReference>
<dbReference type="Pfam" id="PF16006">
    <property type="entry name" value="NUSAP"/>
    <property type="match status" value="2"/>
</dbReference>
<sequence length="525" mass="58833">MEAPTLSELEGLRYSELQKLAKTVGLKANLKADKLLKDLKVHFYPESKDESPDYDGGSSLTDTDELNSSQEKDEPVSVSFVTHRRGRGRKPLKNHDTPKDEFLSVSVGAGTESLASETDNTQHQNCLESKKKEVSPPTIDNKHRKRSRSEDTSKQNNLETTEKRQKKASDITSAPSAGKIPRYVGRLSKPESKPSTPNFKKLHEAHFKKMESIDKYMERKQKRLDTVSSSIQEMKMLTKKSNLLKLVEKTPVSDIKKPVKSRLSLLSSLPPTTGASPSRTPTNQRRSGRFSAANKSILFDRSGFKPSVLSSSKMNVRFSEATKDNEHKRSLIKTPARKSSSFLAITPESEPRQMLPNVKKTPARKSLSVLAVTPESEPKQMLPSVKKNEPMTTPEKAKKTDLNTTIQPSTVILESTCPQNKEIAITPFKFTAQTTETPNTNKKGKFNLQASLSRPLGYQPHKGKLKPWGGSEENKCGSNNNVSVLKNNFKQPHLQTREDRRKQHEQDRKGKRDQTLGTRRGVPVQ</sequence>